<organism>
    <name type="scientific">Proteus mirabilis (strain HI4320)</name>
    <dbReference type="NCBI Taxonomy" id="529507"/>
    <lineage>
        <taxon>Bacteria</taxon>
        <taxon>Pseudomonadati</taxon>
        <taxon>Pseudomonadota</taxon>
        <taxon>Gammaproteobacteria</taxon>
        <taxon>Enterobacterales</taxon>
        <taxon>Morganellaceae</taxon>
        <taxon>Proteus</taxon>
    </lineage>
</organism>
<comment type="function">
    <text evidence="1">May be involved in recombination.</text>
</comment>
<comment type="subcellular location">
    <subcellularLocation>
        <location evidence="1">Cytoplasm</location>
        <location evidence="1">Nucleoid</location>
    </subcellularLocation>
</comment>
<comment type="similarity">
    <text evidence="1">Belongs to the RdgC family.</text>
</comment>
<accession>B4F2X9</accession>
<dbReference type="EMBL" id="AM942759">
    <property type="protein sequence ID" value="CAR40283.1"/>
    <property type="molecule type" value="Genomic_DNA"/>
</dbReference>
<dbReference type="RefSeq" id="WP_004245172.1">
    <property type="nucleotide sequence ID" value="NC_010554.1"/>
</dbReference>
<dbReference type="SMR" id="B4F2X9"/>
<dbReference type="EnsemblBacteria" id="CAR40283">
    <property type="protein sequence ID" value="CAR40283"/>
    <property type="gene ID" value="PMI0043"/>
</dbReference>
<dbReference type="GeneID" id="6803384"/>
<dbReference type="KEGG" id="pmr:PMI0043"/>
<dbReference type="eggNOG" id="COG2974">
    <property type="taxonomic scope" value="Bacteria"/>
</dbReference>
<dbReference type="HOGENOM" id="CLU_052038_1_1_6"/>
<dbReference type="Proteomes" id="UP000008319">
    <property type="component" value="Chromosome"/>
</dbReference>
<dbReference type="GO" id="GO:0043590">
    <property type="term" value="C:bacterial nucleoid"/>
    <property type="evidence" value="ECO:0007669"/>
    <property type="project" value="TreeGrafter"/>
</dbReference>
<dbReference type="GO" id="GO:0005737">
    <property type="term" value="C:cytoplasm"/>
    <property type="evidence" value="ECO:0007669"/>
    <property type="project" value="UniProtKB-UniRule"/>
</dbReference>
<dbReference type="GO" id="GO:0003690">
    <property type="term" value="F:double-stranded DNA binding"/>
    <property type="evidence" value="ECO:0007669"/>
    <property type="project" value="TreeGrafter"/>
</dbReference>
<dbReference type="GO" id="GO:0006310">
    <property type="term" value="P:DNA recombination"/>
    <property type="evidence" value="ECO:0007669"/>
    <property type="project" value="UniProtKB-UniRule"/>
</dbReference>
<dbReference type="GO" id="GO:0000018">
    <property type="term" value="P:regulation of DNA recombination"/>
    <property type="evidence" value="ECO:0007669"/>
    <property type="project" value="TreeGrafter"/>
</dbReference>
<dbReference type="HAMAP" id="MF_00194">
    <property type="entry name" value="RdgC"/>
    <property type="match status" value="1"/>
</dbReference>
<dbReference type="InterPro" id="IPR007476">
    <property type="entry name" value="RdgC"/>
</dbReference>
<dbReference type="NCBIfam" id="NF001460">
    <property type="entry name" value="PRK00321.1-1"/>
    <property type="match status" value="1"/>
</dbReference>
<dbReference type="NCBIfam" id="NF001462">
    <property type="entry name" value="PRK00321.1-3"/>
    <property type="match status" value="1"/>
</dbReference>
<dbReference type="NCBIfam" id="NF001464">
    <property type="entry name" value="PRK00321.1-5"/>
    <property type="match status" value="1"/>
</dbReference>
<dbReference type="PANTHER" id="PTHR38103">
    <property type="entry name" value="RECOMBINATION-ASSOCIATED PROTEIN RDGC"/>
    <property type="match status" value="1"/>
</dbReference>
<dbReference type="PANTHER" id="PTHR38103:SF1">
    <property type="entry name" value="RECOMBINATION-ASSOCIATED PROTEIN RDGC"/>
    <property type="match status" value="1"/>
</dbReference>
<dbReference type="Pfam" id="PF04381">
    <property type="entry name" value="RdgC"/>
    <property type="match status" value="1"/>
</dbReference>
<sequence>MLWFKNILVYRLNKEIALSMDELEQQLASLAFTPCSSQDMTKTGWVSPMGDRGEALIHVAGKQVMMCARKEDKILPATVIKQALQDKVEKLEGEQGRKLKKTEKATLKDEVVHTLLPRAFSKFSQTFIWLDLDKQLVIVDSGSAKRAEDNLALLRKTLGSLPVVPLNFNESVESKMTQWVRSGELPAGFTLMDEAELKAVLEEGGVIRCKKQELVSDEIATHIEAGKFVTKLSLDWEDRLQFMLCDDGSIKRIKFSDTLREQNDDIDKADFAQRFDADFVLMTGELSALIERVIEVLGGEAE</sequence>
<gene>
    <name evidence="1" type="primary">rdgC</name>
    <name type="ordered locus">PMI0043</name>
</gene>
<evidence type="ECO:0000255" key="1">
    <source>
        <dbReference type="HAMAP-Rule" id="MF_00194"/>
    </source>
</evidence>
<proteinExistence type="inferred from homology"/>
<keyword id="KW-0963">Cytoplasm</keyword>
<keyword id="KW-0233">DNA recombination</keyword>
<keyword id="KW-1185">Reference proteome</keyword>
<name>RDGC_PROMH</name>
<protein>
    <recommendedName>
        <fullName evidence="1">Recombination-associated protein RdgC</fullName>
    </recommendedName>
</protein>
<reference key="1">
    <citation type="journal article" date="2008" name="J. Bacteriol.">
        <title>Complete genome sequence of uropathogenic Proteus mirabilis, a master of both adherence and motility.</title>
        <authorList>
            <person name="Pearson M.M."/>
            <person name="Sebaihia M."/>
            <person name="Churcher C."/>
            <person name="Quail M.A."/>
            <person name="Seshasayee A.S."/>
            <person name="Luscombe N.M."/>
            <person name="Abdellah Z."/>
            <person name="Arrosmith C."/>
            <person name="Atkin B."/>
            <person name="Chillingworth T."/>
            <person name="Hauser H."/>
            <person name="Jagels K."/>
            <person name="Moule S."/>
            <person name="Mungall K."/>
            <person name="Norbertczak H."/>
            <person name="Rabbinowitsch E."/>
            <person name="Walker D."/>
            <person name="Whithead S."/>
            <person name="Thomson N.R."/>
            <person name="Rather P.N."/>
            <person name="Parkhill J."/>
            <person name="Mobley H.L.T."/>
        </authorList>
    </citation>
    <scope>NUCLEOTIDE SEQUENCE [LARGE SCALE GENOMIC DNA]</scope>
    <source>
        <strain>HI4320</strain>
    </source>
</reference>
<feature type="chain" id="PRO_1000099067" description="Recombination-associated protein RdgC">
    <location>
        <begin position="1"/>
        <end position="302"/>
    </location>
</feature>